<keyword id="KW-0472">Membrane</keyword>
<keyword id="KW-1185">Reference proteome</keyword>
<keyword id="KW-0812">Transmembrane</keyword>
<keyword id="KW-1133">Transmembrane helix</keyword>
<sequence length="75" mass="8470">MSIGLAVGLIVGLSILFFIIGGVVAFFVTRRLFQKQLKENPPINEKMIRAMFLQMGVKASESRIRQVMRSMQQAK</sequence>
<comment type="subcellular location">
    <subcellularLocation>
        <location evidence="2">Membrane</location>
        <topology evidence="2">Single-pass membrane protein</topology>
    </subcellularLocation>
</comment>
<comment type="similarity">
    <text evidence="2">Belongs to the UPF0154 family.</text>
</comment>
<gene>
    <name type="ordered locus">MYPU_1460</name>
</gene>
<organism>
    <name type="scientific">Mycoplasmopsis pulmonis (strain UAB CTIP)</name>
    <name type="common">Mycoplasma pulmonis</name>
    <dbReference type="NCBI Taxonomy" id="272635"/>
    <lineage>
        <taxon>Bacteria</taxon>
        <taxon>Bacillati</taxon>
        <taxon>Mycoplasmatota</taxon>
        <taxon>Mycoplasmoidales</taxon>
        <taxon>Metamycoplasmataceae</taxon>
        <taxon>Mycoplasmopsis</taxon>
    </lineage>
</organism>
<protein>
    <recommendedName>
        <fullName>UPF0154 protein MYPU_1460</fullName>
    </recommendedName>
</protein>
<accession>Q98R64</accession>
<dbReference type="EMBL" id="AL445563">
    <property type="protein sequence ID" value="CAC13319.1"/>
    <property type="molecule type" value="Genomic_DNA"/>
</dbReference>
<dbReference type="PIR" id="B90530">
    <property type="entry name" value="B90530"/>
</dbReference>
<dbReference type="RefSeq" id="WP_010924950.1">
    <property type="nucleotide sequence ID" value="NC_002771.1"/>
</dbReference>
<dbReference type="SMR" id="Q98R64"/>
<dbReference type="STRING" id="272635.gene:17576730"/>
<dbReference type="KEGG" id="mpu:MYPU_1460"/>
<dbReference type="eggNOG" id="COG3763">
    <property type="taxonomic scope" value="Bacteria"/>
</dbReference>
<dbReference type="HOGENOM" id="CLU_180108_1_0_14"/>
<dbReference type="BioCyc" id="MPUL272635:G1GT6-147-MONOMER"/>
<dbReference type="Proteomes" id="UP000000528">
    <property type="component" value="Chromosome"/>
</dbReference>
<dbReference type="GO" id="GO:0016020">
    <property type="term" value="C:membrane"/>
    <property type="evidence" value="ECO:0007669"/>
    <property type="project" value="UniProtKB-SubCell"/>
</dbReference>
<dbReference type="HAMAP" id="MF_00363">
    <property type="entry name" value="UPF0154"/>
    <property type="match status" value="1"/>
</dbReference>
<dbReference type="InterPro" id="IPR005359">
    <property type="entry name" value="UPF0154"/>
</dbReference>
<dbReference type="Pfam" id="PF03672">
    <property type="entry name" value="UPF0154"/>
    <property type="match status" value="1"/>
</dbReference>
<proteinExistence type="inferred from homology"/>
<reference key="1">
    <citation type="journal article" date="2001" name="Nucleic Acids Res.">
        <title>The complete genome sequence of the murine respiratory pathogen Mycoplasma pulmonis.</title>
        <authorList>
            <person name="Chambaud I."/>
            <person name="Heilig R."/>
            <person name="Ferris S."/>
            <person name="Barbe V."/>
            <person name="Samson D."/>
            <person name="Galisson F."/>
            <person name="Moszer I."/>
            <person name="Dybvig K."/>
            <person name="Wroblewski H."/>
            <person name="Viari A."/>
            <person name="Rocha E.P.C."/>
            <person name="Blanchard A."/>
        </authorList>
    </citation>
    <scope>NUCLEOTIDE SEQUENCE [LARGE SCALE GENOMIC DNA]</scope>
    <source>
        <strain>UAB CTIP</strain>
    </source>
</reference>
<feature type="chain" id="PRO_0000214971" description="UPF0154 protein MYPU_1460">
    <location>
        <begin position="1"/>
        <end position="75"/>
    </location>
</feature>
<feature type="transmembrane region" description="Helical" evidence="1">
    <location>
        <begin position="8"/>
        <end position="28"/>
    </location>
</feature>
<name>Y146_MYCPU</name>
<evidence type="ECO:0000255" key="1"/>
<evidence type="ECO:0000305" key="2"/>